<dbReference type="EC" id="2.5.1.141" evidence="1"/>
<dbReference type="EMBL" id="CP000753">
    <property type="protein sequence ID" value="ABS10338.1"/>
    <property type="molecule type" value="Genomic_DNA"/>
</dbReference>
<dbReference type="SMR" id="A6WU49"/>
<dbReference type="KEGG" id="sbm:Shew185_4222"/>
<dbReference type="HOGENOM" id="CLU_029631_0_0_6"/>
<dbReference type="UniPathway" id="UPA00834">
    <property type="reaction ID" value="UER00712"/>
</dbReference>
<dbReference type="GO" id="GO:0005886">
    <property type="term" value="C:plasma membrane"/>
    <property type="evidence" value="ECO:0007669"/>
    <property type="project" value="UniProtKB-SubCell"/>
</dbReference>
<dbReference type="GO" id="GO:0008495">
    <property type="term" value="F:protoheme IX farnesyltransferase activity"/>
    <property type="evidence" value="ECO:0007669"/>
    <property type="project" value="UniProtKB-UniRule"/>
</dbReference>
<dbReference type="GO" id="GO:0048034">
    <property type="term" value="P:heme O biosynthetic process"/>
    <property type="evidence" value="ECO:0007669"/>
    <property type="project" value="UniProtKB-UniRule"/>
</dbReference>
<dbReference type="CDD" id="cd13957">
    <property type="entry name" value="PT_UbiA_Cox10"/>
    <property type="match status" value="1"/>
</dbReference>
<dbReference type="FunFam" id="1.10.357.140:FF:000001">
    <property type="entry name" value="Protoheme IX farnesyltransferase"/>
    <property type="match status" value="1"/>
</dbReference>
<dbReference type="Gene3D" id="1.10.357.140">
    <property type="entry name" value="UbiA prenyltransferase"/>
    <property type="match status" value="1"/>
</dbReference>
<dbReference type="HAMAP" id="MF_00154">
    <property type="entry name" value="CyoE_CtaB"/>
    <property type="match status" value="1"/>
</dbReference>
<dbReference type="InterPro" id="IPR006369">
    <property type="entry name" value="Protohaem_IX_farnesylTrfase"/>
</dbReference>
<dbReference type="InterPro" id="IPR000537">
    <property type="entry name" value="UbiA_prenyltransferase"/>
</dbReference>
<dbReference type="InterPro" id="IPR030470">
    <property type="entry name" value="UbiA_prenylTrfase_CS"/>
</dbReference>
<dbReference type="InterPro" id="IPR044878">
    <property type="entry name" value="UbiA_sf"/>
</dbReference>
<dbReference type="NCBIfam" id="TIGR01473">
    <property type="entry name" value="cyoE_ctaB"/>
    <property type="match status" value="1"/>
</dbReference>
<dbReference type="NCBIfam" id="NF003348">
    <property type="entry name" value="PRK04375.1-1"/>
    <property type="match status" value="1"/>
</dbReference>
<dbReference type="PANTHER" id="PTHR43448">
    <property type="entry name" value="PROTOHEME IX FARNESYLTRANSFERASE, MITOCHONDRIAL"/>
    <property type="match status" value="1"/>
</dbReference>
<dbReference type="PANTHER" id="PTHR43448:SF2">
    <property type="entry name" value="PROTOHEME IX FARNESYLTRANSFERASE, MITOCHONDRIAL"/>
    <property type="match status" value="1"/>
</dbReference>
<dbReference type="Pfam" id="PF01040">
    <property type="entry name" value="UbiA"/>
    <property type="match status" value="1"/>
</dbReference>
<dbReference type="PROSITE" id="PS00943">
    <property type="entry name" value="UBIA"/>
    <property type="match status" value="1"/>
</dbReference>
<comment type="function">
    <text evidence="1">Converts heme B (protoheme IX) to heme O by substitution of the vinyl group on carbon 2 of heme B porphyrin ring with a hydroxyethyl farnesyl side group.</text>
</comment>
<comment type="catalytic activity">
    <reaction evidence="1">
        <text>heme b + (2E,6E)-farnesyl diphosphate + H2O = Fe(II)-heme o + diphosphate</text>
        <dbReference type="Rhea" id="RHEA:28070"/>
        <dbReference type="ChEBI" id="CHEBI:15377"/>
        <dbReference type="ChEBI" id="CHEBI:33019"/>
        <dbReference type="ChEBI" id="CHEBI:60344"/>
        <dbReference type="ChEBI" id="CHEBI:60530"/>
        <dbReference type="ChEBI" id="CHEBI:175763"/>
        <dbReference type="EC" id="2.5.1.141"/>
    </reaction>
</comment>
<comment type="pathway">
    <text evidence="1">Porphyrin-containing compound metabolism; heme O biosynthesis; heme O from protoheme: step 1/1.</text>
</comment>
<comment type="subcellular location">
    <subcellularLocation>
        <location evidence="1">Cell inner membrane</location>
        <topology evidence="1">Multi-pass membrane protein</topology>
    </subcellularLocation>
</comment>
<comment type="miscellaneous">
    <text evidence="1">Carbon 2 of the heme B porphyrin ring is defined according to the Fischer nomenclature.</text>
</comment>
<comment type="similarity">
    <text evidence="1">Belongs to the UbiA prenyltransferase family. Protoheme IX farnesyltransferase subfamily.</text>
</comment>
<evidence type="ECO:0000255" key="1">
    <source>
        <dbReference type="HAMAP-Rule" id="MF_00154"/>
    </source>
</evidence>
<reference key="1">
    <citation type="submission" date="2007-07" db="EMBL/GenBank/DDBJ databases">
        <title>Complete sequence of chromosome of Shewanella baltica OS185.</title>
        <authorList>
            <consortium name="US DOE Joint Genome Institute"/>
            <person name="Copeland A."/>
            <person name="Lucas S."/>
            <person name="Lapidus A."/>
            <person name="Barry K."/>
            <person name="Glavina del Rio T."/>
            <person name="Dalin E."/>
            <person name="Tice H."/>
            <person name="Pitluck S."/>
            <person name="Sims D."/>
            <person name="Brettin T."/>
            <person name="Bruce D."/>
            <person name="Detter J.C."/>
            <person name="Han C."/>
            <person name="Schmutz J."/>
            <person name="Larimer F."/>
            <person name="Land M."/>
            <person name="Hauser L."/>
            <person name="Kyrpides N."/>
            <person name="Mikhailova N."/>
            <person name="Brettar I."/>
            <person name="Rodrigues J."/>
            <person name="Konstantinidis K."/>
            <person name="Tiedje J."/>
            <person name="Richardson P."/>
        </authorList>
    </citation>
    <scope>NUCLEOTIDE SEQUENCE [LARGE SCALE GENOMIC DNA]</scope>
    <source>
        <strain>OS185</strain>
    </source>
</reference>
<name>CYOE2_SHEB8</name>
<feature type="chain" id="PRO_0000326943" description="Protoheme IX farnesyltransferase 2">
    <location>
        <begin position="1"/>
        <end position="310"/>
    </location>
</feature>
<feature type="transmembrane region" description="Helical" evidence="1">
    <location>
        <begin position="25"/>
        <end position="45"/>
    </location>
</feature>
<feature type="transmembrane region" description="Helical" evidence="1">
    <location>
        <begin position="49"/>
        <end position="69"/>
    </location>
</feature>
<feature type="transmembrane region" description="Helical" evidence="1">
    <location>
        <begin position="87"/>
        <end position="107"/>
    </location>
</feature>
<feature type="transmembrane region" description="Helical" evidence="1">
    <location>
        <begin position="120"/>
        <end position="139"/>
    </location>
</feature>
<feature type="transmembrane region" description="Helical" evidence="1">
    <location>
        <begin position="145"/>
        <end position="165"/>
    </location>
</feature>
<feature type="transmembrane region" description="Helical" evidence="1">
    <location>
        <begin position="176"/>
        <end position="196"/>
    </location>
</feature>
<feature type="transmembrane region" description="Helical" evidence="1">
    <location>
        <begin position="220"/>
        <end position="240"/>
    </location>
</feature>
<feature type="transmembrane region" description="Helical" evidence="1">
    <location>
        <begin position="242"/>
        <end position="262"/>
    </location>
</feature>
<feature type="transmembrane region" description="Helical" evidence="1">
    <location>
        <begin position="277"/>
        <end position="297"/>
    </location>
</feature>
<protein>
    <recommendedName>
        <fullName evidence="1">Protoheme IX farnesyltransferase 2</fullName>
        <ecNumber evidence="1">2.5.1.141</ecNumber>
    </recommendedName>
    <alternativeName>
        <fullName evidence="1">Heme B farnesyltransferase 2</fullName>
    </alternativeName>
    <alternativeName>
        <fullName evidence="1">Heme O synthase 2</fullName>
    </alternativeName>
</protein>
<gene>
    <name evidence="1" type="primary">cyoE2</name>
    <name type="ordered locus">Shew185_4222</name>
</gene>
<organism>
    <name type="scientific">Shewanella baltica (strain OS185)</name>
    <dbReference type="NCBI Taxonomy" id="402882"/>
    <lineage>
        <taxon>Bacteria</taxon>
        <taxon>Pseudomonadati</taxon>
        <taxon>Pseudomonadota</taxon>
        <taxon>Gammaproteobacteria</taxon>
        <taxon>Alteromonadales</taxon>
        <taxon>Shewanellaceae</taxon>
        <taxon>Shewanella</taxon>
    </lineage>
</organism>
<proteinExistence type="inferred from homology"/>
<accession>A6WU49</accession>
<keyword id="KW-0997">Cell inner membrane</keyword>
<keyword id="KW-1003">Cell membrane</keyword>
<keyword id="KW-0350">Heme biosynthesis</keyword>
<keyword id="KW-0472">Membrane</keyword>
<keyword id="KW-0808">Transferase</keyword>
<keyword id="KW-0812">Transmembrane</keyword>
<keyword id="KW-1133">Transmembrane helix</keyword>
<sequence length="310" mass="33334">MQIQDRFMSPQWKARFKGYVQVTKPGIIFGNLISVAGGFLLAAKGDVNLVLMLASLVGLSLVVASGCAINNCIDRDIDAKMQRTCKRVTVTGEIAVGNVLAFGLALGVLGFSILALFTNALALLFAVIGYIVYVGVYSLYMKRNSVYGTLVGSFSGAVPPVVGYCSVTGQMDMGAAILLLMFSLWQMPHSYAIAIFRFNDYAAANIPVLPVAEGMTKAKLHIVLYIAVFALVSALLPLAGYTGIAFMAVTCATSLWWLAMALKGYRHGVDMQRWARQVFGFSIITITALSVTMALDFQVVSQAPLLTLVK</sequence>